<evidence type="ECO:0000255" key="1">
    <source>
        <dbReference type="HAMAP-Rule" id="MF_00550"/>
    </source>
</evidence>
<gene>
    <name evidence="1" type="primary">pepT</name>
    <name type="ordered locus">MCCL_0491</name>
</gene>
<protein>
    <recommendedName>
        <fullName evidence="1">Peptidase T</fullName>
        <ecNumber evidence="1">3.4.11.4</ecNumber>
    </recommendedName>
    <alternativeName>
        <fullName evidence="1">Aminotripeptidase</fullName>
        <shortName evidence="1">Tripeptidase</shortName>
    </alternativeName>
    <alternativeName>
        <fullName evidence="1">Tripeptide aminopeptidase</fullName>
    </alternativeName>
</protein>
<keyword id="KW-0031">Aminopeptidase</keyword>
<keyword id="KW-0963">Cytoplasm</keyword>
<keyword id="KW-0378">Hydrolase</keyword>
<keyword id="KW-0479">Metal-binding</keyword>
<keyword id="KW-0482">Metalloprotease</keyword>
<keyword id="KW-0645">Protease</keyword>
<keyword id="KW-1185">Reference proteome</keyword>
<keyword id="KW-0862">Zinc</keyword>
<dbReference type="EC" id="3.4.11.4" evidence="1"/>
<dbReference type="EMBL" id="AP009484">
    <property type="protein sequence ID" value="BAH17198.1"/>
    <property type="molecule type" value="Genomic_DNA"/>
</dbReference>
<dbReference type="RefSeq" id="WP_012656399.1">
    <property type="nucleotide sequence ID" value="NC_011999.1"/>
</dbReference>
<dbReference type="SMR" id="B9EAD7"/>
<dbReference type="STRING" id="458233.MCCL_0491"/>
<dbReference type="MEROPS" id="M20.003"/>
<dbReference type="GeneID" id="61129710"/>
<dbReference type="KEGG" id="mcl:MCCL_0491"/>
<dbReference type="eggNOG" id="COG2195">
    <property type="taxonomic scope" value="Bacteria"/>
</dbReference>
<dbReference type="HOGENOM" id="CLU_053676_0_0_9"/>
<dbReference type="OrthoDB" id="9804934at2"/>
<dbReference type="Proteomes" id="UP000001383">
    <property type="component" value="Chromosome"/>
</dbReference>
<dbReference type="GO" id="GO:0005829">
    <property type="term" value="C:cytosol"/>
    <property type="evidence" value="ECO:0007669"/>
    <property type="project" value="TreeGrafter"/>
</dbReference>
<dbReference type="GO" id="GO:0008237">
    <property type="term" value="F:metallopeptidase activity"/>
    <property type="evidence" value="ECO:0007669"/>
    <property type="project" value="UniProtKB-KW"/>
</dbReference>
<dbReference type="GO" id="GO:0045148">
    <property type="term" value="F:tripeptide aminopeptidase activity"/>
    <property type="evidence" value="ECO:0007669"/>
    <property type="project" value="UniProtKB-UniRule"/>
</dbReference>
<dbReference type="GO" id="GO:0008270">
    <property type="term" value="F:zinc ion binding"/>
    <property type="evidence" value="ECO:0007669"/>
    <property type="project" value="UniProtKB-UniRule"/>
</dbReference>
<dbReference type="GO" id="GO:0043171">
    <property type="term" value="P:peptide catabolic process"/>
    <property type="evidence" value="ECO:0007669"/>
    <property type="project" value="UniProtKB-UniRule"/>
</dbReference>
<dbReference type="GO" id="GO:0006508">
    <property type="term" value="P:proteolysis"/>
    <property type="evidence" value="ECO:0007669"/>
    <property type="project" value="UniProtKB-UniRule"/>
</dbReference>
<dbReference type="CDD" id="cd03892">
    <property type="entry name" value="M20_peptT"/>
    <property type="match status" value="1"/>
</dbReference>
<dbReference type="FunFam" id="3.30.70.360:FF:000002">
    <property type="entry name" value="Peptidase T"/>
    <property type="match status" value="1"/>
</dbReference>
<dbReference type="Gene3D" id="3.30.70.360">
    <property type="match status" value="1"/>
</dbReference>
<dbReference type="Gene3D" id="3.40.630.10">
    <property type="entry name" value="Zn peptidases"/>
    <property type="match status" value="1"/>
</dbReference>
<dbReference type="HAMAP" id="MF_00550">
    <property type="entry name" value="Aminopeptidase_M20"/>
    <property type="match status" value="1"/>
</dbReference>
<dbReference type="InterPro" id="IPR001261">
    <property type="entry name" value="ArgE/DapE_CS"/>
</dbReference>
<dbReference type="InterPro" id="IPR036264">
    <property type="entry name" value="Bact_exopeptidase_dim_dom"/>
</dbReference>
<dbReference type="InterPro" id="IPR002933">
    <property type="entry name" value="Peptidase_M20"/>
</dbReference>
<dbReference type="InterPro" id="IPR011650">
    <property type="entry name" value="Peptidase_M20_dimer"/>
</dbReference>
<dbReference type="InterPro" id="IPR010161">
    <property type="entry name" value="Peptidase_M20B"/>
</dbReference>
<dbReference type="NCBIfam" id="TIGR01882">
    <property type="entry name" value="peptidase-T"/>
    <property type="match status" value="1"/>
</dbReference>
<dbReference type="NCBIfam" id="NF003976">
    <property type="entry name" value="PRK05469.1"/>
    <property type="match status" value="1"/>
</dbReference>
<dbReference type="NCBIfam" id="NF009920">
    <property type="entry name" value="PRK13381.1"/>
    <property type="match status" value="1"/>
</dbReference>
<dbReference type="PANTHER" id="PTHR42994">
    <property type="entry name" value="PEPTIDASE T"/>
    <property type="match status" value="1"/>
</dbReference>
<dbReference type="PANTHER" id="PTHR42994:SF1">
    <property type="entry name" value="PEPTIDASE T"/>
    <property type="match status" value="1"/>
</dbReference>
<dbReference type="Pfam" id="PF07687">
    <property type="entry name" value="M20_dimer"/>
    <property type="match status" value="1"/>
</dbReference>
<dbReference type="Pfam" id="PF01546">
    <property type="entry name" value="Peptidase_M20"/>
    <property type="match status" value="1"/>
</dbReference>
<dbReference type="PIRSF" id="PIRSF037215">
    <property type="entry name" value="Peptidase_M20B"/>
    <property type="match status" value="1"/>
</dbReference>
<dbReference type="SUPFAM" id="SSF55031">
    <property type="entry name" value="Bacterial exopeptidase dimerisation domain"/>
    <property type="match status" value="1"/>
</dbReference>
<dbReference type="SUPFAM" id="SSF53187">
    <property type="entry name" value="Zn-dependent exopeptidases"/>
    <property type="match status" value="1"/>
</dbReference>
<dbReference type="PROSITE" id="PS00758">
    <property type="entry name" value="ARGE_DAPE_CPG2_1"/>
    <property type="match status" value="1"/>
</dbReference>
<dbReference type="PROSITE" id="PS00759">
    <property type="entry name" value="ARGE_DAPE_CPG2_2"/>
    <property type="match status" value="1"/>
</dbReference>
<reference key="1">
    <citation type="journal article" date="2009" name="J. Bacteriol.">
        <title>Complete genome sequence of Macrococcus caseolyticus strain JCSCS5402, reflecting the ancestral genome of the human-pathogenic staphylococci.</title>
        <authorList>
            <person name="Baba T."/>
            <person name="Kuwahara-Arai K."/>
            <person name="Uchiyama I."/>
            <person name="Takeuchi F."/>
            <person name="Ito T."/>
            <person name="Hiramatsu K."/>
        </authorList>
    </citation>
    <scope>NUCLEOTIDE SEQUENCE [LARGE SCALE GENOMIC DNA]</scope>
    <source>
        <strain>JCSC5402</strain>
    </source>
</reference>
<organism>
    <name type="scientific">Macrococcus caseolyticus (strain JCSC5402)</name>
    <name type="common">Macrococcoides caseolyticum</name>
    <dbReference type="NCBI Taxonomy" id="458233"/>
    <lineage>
        <taxon>Bacteria</taxon>
        <taxon>Bacillati</taxon>
        <taxon>Bacillota</taxon>
        <taxon>Bacilli</taxon>
        <taxon>Bacillales</taxon>
        <taxon>Staphylococcaceae</taxon>
        <taxon>Macrococcoides</taxon>
    </lineage>
</organism>
<name>PEPT_MACCJ</name>
<comment type="function">
    <text evidence="1">Cleaves the N-terminal amino acid of tripeptides.</text>
</comment>
<comment type="catalytic activity">
    <reaction evidence="1">
        <text>Release of the N-terminal residue from a tripeptide.</text>
        <dbReference type="EC" id="3.4.11.4"/>
    </reaction>
</comment>
<comment type="cofactor">
    <cofactor evidence="1">
        <name>Zn(2+)</name>
        <dbReference type="ChEBI" id="CHEBI:29105"/>
    </cofactor>
    <text evidence="1">Binds 2 Zn(2+) ions per subunit.</text>
</comment>
<comment type="subcellular location">
    <subcellularLocation>
        <location evidence="1">Cytoplasm</location>
    </subcellularLocation>
</comment>
<comment type="similarity">
    <text evidence="1">Belongs to the peptidase M20B family.</text>
</comment>
<sequence>MKEKLIDRLTSYVVIDTQSDASSTTTPSTDKQWNLLNQLKQEIEQLGLETDIDEYGYLFATLPSNTNKDVPVIGLLAHVDTATDFTGTNVNPQIIQSYDGNDITLKSGLKIETAKFPELSLYKGHTLITTDGTTLLGADNKAGIAEIMTAIEYLIAHPEIKHGKIRFGFTPDEEIGRGPHKFDVERFACDFAYTIDGGRRGELQYESFNAAGVNVTFNGVNVHPGSAKDKMVNALNLAVRFQSSLPANEVPEHTEGYEGFFHLMELNGNVERAQLSYIIRDHSREQFEARKVKMHEIITSIQNEYGEQAAHIEINDQYYNMGEKITPHPQLIDIPLEVMKSLNIEPIVEPIRGGTDGSQLSYMGLPTPNLFTGGENYHGPYEYVSVDDMERAVMNIVGILQKFEEKA</sequence>
<accession>B9EAD7</accession>
<feature type="chain" id="PRO_1000200891" description="Peptidase T">
    <location>
        <begin position="1"/>
        <end position="407"/>
    </location>
</feature>
<feature type="active site" evidence="1">
    <location>
        <position position="80"/>
    </location>
</feature>
<feature type="active site" description="Proton acceptor" evidence="1">
    <location>
        <position position="173"/>
    </location>
</feature>
<feature type="binding site" evidence="1">
    <location>
        <position position="78"/>
    </location>
    <ligand>
        <name>Zn(2+)</name>
        <dbReference type="ChEBI" id="CHEBI:29105"/>
        <label>1</label>
    </ligand>
</feature>
<feature type="binding site" evidence="1">
    <location>
        <position position="139"/>
    </location>
    <ligand>
        <name>Zn(2+)</name>
        <dbReference type="ChEBI" id="CHEBI:29105"/>
        <label>1</label>
    </ligand>
</feature>
<feature type="binding site" evidence="1">
    <location>
        <position position="139"/>
    </location>
    <ligand>
        <name>Zn(2+)</name>
        <dbReference type="ChEBI" id="CHEBI:29105"/>
        <label>2</label>
    </ligand>
</feature>
<feature type="binding site" evidence="1">
    <location>
        <position position="174"/>
    </location>
    <ligand>
        <name>Zn(2+)</name>
        <dbReference type="ChEBI" id="CHEBI:29105"/>
        <label>2</label>
    </ligand>
</feature>
<feature type="binding site" evidence="1">
    <location>
        <position position="196"/>
    </location>
    <ligand>
        <name>Zn(2+)</name>
        <dbReference type="ChEBI" id="CHEBI:29105"/>
        <label>1</label>
    </ligand>
</feature>
<feature type="binding site" evidence="1">
    <location>
        <position position="378"/>
    </location>
    <ligand>
        <name>Zn(2+)</name>
        <dbReference type="ChEBI" id="CHEBI:29105"/>
        <label>2</label>
    </ligand>
</feature>
<proteinExistence type="inferred from homology"/>